<keyword id="KW-1185">Reference proteome</keyword>
<keyword id="KW-0687">Ribonucleoprotein</keyword>
<keyword id="KW-0689">Ribosomal protein</keyword>
<comment type="subunit">
    <text evidence="1">Part of the 50S ribosomal subunit.</text>
</comment>
<comment type="similarity">
    <text evidence="1">Belongs to the universal ribosomal protein uL30 family.</text>
</comment>
<protein>
    <recommendedName>
        <fullName evidence="1">Large ribosomal subunit protein uL30</fullName>
    </recommendedName>
    <alternativeName>
        <fullName evidence="2">50S ribosomal protein L30</fullName>
    </alternativeName>
</protein>
<proteinExistence type="inferred from homology"/>
<organism>
    <name type="scientific">Methylobacillus flagellatus (strain ATCC 51484 / DSM 6875 / VKM B-1610 / KT)</name>
    <dbReference type="NCBI Taxonomy" id="265072"/>
    <lineage>
        <taxon>Bacteria</taxon>
        <taxon>Pseudomonadati</taxon>
        <taxon>Pseudomonadota</taxon>
        <taxon>Betaproteobacteria</taxon>
        <taxon>Nitrosomonadales</taxon>
        <taxon>Methylophilaceae</taxon>
        <taxon>Methylobacillus</taxon>
    </lineage>
</organism>
<dbReference type="EMBL" id="CP000284">
    <property type="protein sequence ID" value="ABE48568.1"/>
    <property type="molecule type" value="Genomic_DNA"/>
</dbReference>
<dbReference type="RefSeq" id="WP_011478665.1">
    <property type="nucleotide sequence ID" value="NC_007947.1"/>
</dbReference>
<dbReference type="SMR" id="Q1H4L9"/>
<dbReference type="STRING" id="265072.Mfla_0297"/>
<dbReference type="KEGG" id="mfa:Mfla_0297"/>
<dbReference type="eggNOG" id="COG1841">
    <property type="taxonomic scope" value="Bacteria"/>
</dbReference>
<dbReference type="HOGENOM" id="CLU_131047_1_4_4"/>
<dbReference type="OrthoDB" id="9812790at2"/>
<dbReference type="Proteomes" id="UP000002440">
    <property type="component" value="Chromosome"/>
</dbReference>
<dbReference type="GO" id="GO:0022625">
    <property type="term" value="C:cytosolic large ribosomal subunit"/>
    <property type="evidence" value="ECO:0007669"/>
    <property type="project" value="TreeGrafter"/>
</dbReference>
<dbReference type="GO" id="GO:0003735">
    <property type="term" value="F:structural constituent of ribosome"/>
    <property type="evidence" value="ECO:0007669"/>
    <property type="project" value="InterPro"/>
</dbReference>
<dbReference type="GO" id="GO:0006412">
    <property type="term" value="P:translation"/>
    <property type="evidence" value="ECO:0007669"/>
    <property type="project" value="UniProtKB-UniRule"/>
</dbReference>
<dbReference type="CDD" id="cd01658">
    <property type="entry name" value="Ribosomal_L30"/>
    <property type="match status" value="1"/>
</dbReference>
<dbReference type="FunFam" id="3.30.1390.20:FF:000001">
    <property type="entry name" value="50S ribosomal protein L30"/>
    <property type="match status" value="1"/>
</dbReference>
<dbReference type="Gene3D" id="3.30.1390.20">
    <property type="entry name" value="Ribosomal protein L30, ferredoxin-like fold domain"/>
    <property type="match status" value="1"/>
</dbReference>
<dbReference type="HAMAP" id="MF_01371_B">
    <property type="entry name" value="Ribosomal_uL30_B"/>
    <property type="match status" value="1"/>
</dbReference>
<dbReference type="InterPro" id="IPR036919">
    <property type="entry name" value="Ribo_uL30_ferredoxin-like_sf"/>
</dbReference>
<dbReference type="InterPro" id="IPR005996">
    <property type="entry name" value="Ribosomal_uL30_bac-type"/>
</dbReference>
<dbReference type="InterPro" id="IPR016082">
    <property type="entry name" value="Ribosomal_uL30_ferredoxin-like"/>
</dbReference>
<dbReference type="NCBIfam" id="TIGR01308">
    <property type="entry name" value="rpmD_bact"/>
    <property type="match status" value="1"/>
</dbReference>
<dbReference type="PANTHER" id="PTHR15892:SF2">
    <property type="entry name" value="LARGE RIBOSOMAL SUBUNIT PROTEIN UL30M"/>
    <property type="match status" value="1"/>
</dbReference>
<dbReference type="PANTHER" id="PTHR15892">
    <property type="entry name" value="MITOCHONDRIAL RIBOSOMAL PROTEIN L30"/>
    <property type="match status" value="1"/>
</dbReference>
<dbReference type="Pfam" id="PF00327">
    <property type="entry name" value="Ribosomal_L30"/>
    <property type="match status" value="1"/>
</dbReference>
<dbReference type="PIRSF" id="PIRSF002211">
    <property type="entry name" value="Ribosomal_L30_bac-type"/>
    <property type="match status" value="1"/>
</dbReference>
<dbReference type="SUPFAM" id="SSF55129">
    <property type="entry name" value="Ribosomal protein L30p/L7e"/>
    <property type="match status" value="1"/>
</dbReference>
<reference key="1">
    <citation type="submission" date="2006-03" db="EMBL/GenBank/DDBJ databases">
        <title>Complete sequence of Methylobacillus flagellatus KT.</title>
        <authorList>
            <consortium name="US DOE Joint Genome Institute"/>
            <person name="Copeland A."/>
            <person name="Lucas S."/>
            <person name="Lapidus A."/>
            <person name="Barry K."/>
            <person name="Detter J.C."/>
            <person name="Glavina del Rio T."/>
            <person name="Hammon N."/>
            <person name="Israni S."/>
            <person name="Dalin E."/>
            <person name="Tice H."/>
            <person name="Pitluck S."/>
            <person name="Brettin T."/>
            <person name="Bruce D."/>
            <person name="Han C."/>
            <person name="Tapia R."/>
            <person name="Saunders E."/>
            <person name="Gilna P."/>
            <person name="Schmutz J."/>
            <person name="Larimer F."/>
            <person name="Land M."/>
            <person name="Kyrpides N."/>
            <person name="Anderson I."/>
            <person name="Richardson P."/>
        </authorList>
    </citation>
    <scope>NUCLEOTIDE SEQUENCE [LARGE SCALE GENOMIC DNA]</scope>
    <source>
        <strain>ATCC 51484 / DSM 6875 / VKM B-1610 / KT</strain>
    </source>
</reference>
<name>RL30_METFK</name>
<accession>Q1H4L9</accession>
<feature type="chain" id="PRO_0000273807" description="Large ribosomal subunit protein uL30">
    <location>
        <begin position="1"/>
        <end position="65"/>
    </location>
</feature>
<gene>
    <name evidence="1" type="primary">rpmD</name>
    <name type="ordered locus">Mfla_0297</name>
</gene>
<evidence type="ECO:0000255" key="1">
    <source>
        <dbReference type="HAMAP-Rule" id="MF_01371"/>
    </source>
</evidence>
<evidence type="ECO:0000305" key="2"/>
<sequence>MAKSNKANDLIKVTLVRSTIGRIKAHRASVAGLGLRRLNQTVEVQDTPANRGMINAVSYLLKVEA</sequence>